<accession>Q6CKS3</accession>
<comment type="subcellular location">
    <subcellularLocation>
        <location evidence="1">Mitochondrion</location>
    </subcellularLocation>
</comment>
<comment type="similarity">
    <text evidence="2">Belongs to the RRG7 family.</text>
</comment>
<reference key="1">
    <citation type="journal article" date="2004" name="Nature">
        <title>Genome evolution in yeasts.</title>
        <authorList>
            <person name="Dujon B."/>
            <person name="Sherman D."/>
            <person name="Fischer G."/>
            <person name="Durrens P."/>
            <person name="Casaregola S."/>
            <person name="Lafontaine I."/>
            <person name="de Montigny J."/>
            <person name="Marck C."/>
            <person name="Neuveglise C."/>
            <person name="Talla E."/>
            <person name="Goffard N."/>
            <person name="Frangeul L."/>
            <person name="Aigle M."/>
            <person name="Anthouard V."/>
            <person name="Babour A."/>
            <person name="Barbe V."/>
            <person name="Barnay S."/>
            <person name="Blanchin S."/>
            <person name="Beckerich J.-M."/>
            <person name="Beyne E."/>
            <person name="Bleykasten C."/>
            <person name="Boisrame A."/>
            <person name="Boyer J."/>
            <person name="Cattolico L."/>
            <person name="Confanioleri F."/>
            <person name="de Daruvar A."/>
            <person name="Despons L."/>
            <person name="Fabre E."/>
            <person name="Fairhead C."/>
            <person name="Ferry-Dumazet H."/>
            <person name="Groppi A."/>
            <person name="Hantraye F."/>
            <person name="Hennequin C."/>
            <person name="Jauniaux N."/>
            <person name="Joyet P."/>
            <person name="Kachouri R."/>
            <person name="Kerrest A."/>
            <person name="Koszul R."/>
            <person name="Lemaire M."/>
            <person name="Lesur I."/>
            <person name="Ma L."/>
            <person name="Muller H."/>
            <person name="Nicaud J.-M."/>
            <person name="Nikolski M."/>
            <person name="Oztas S."/>
            <person name="Ozier-Kalogeropoulos O."/>
            <person name="Pellenz S."/>
            <person name="Potier S."/>
            <person name="Richard G.-F."/>
            <person name="Straub M.-L."/>
            <person name="Suleau A."/>
            <person name="Swennen D."/>
            <person name="Tekaia F."/>
            <person name="Wesolowski-Louvel M."/>
            <person name="Westhof E."/>
            <person name="Wirth B."/>
            <person name="Zeniou-Meyer M."/>
            <person name="Zivanovic Y."/>
            <person name="Bolotin-Fukuhara M."/>
            <person name="Thierry A."/>
            <person name="Bouchier C."/>
            <person name="Caudron B."/>
            <person name="Scarpelli C."/>
            <person name="Gaillardin C."/>
            <person name="Weissenbach J."/>
            <person name="Wincker P."/>
            <person name="Souciet J.-L."/>
        </authorList>
    </citation>
    <scope>NUCLEOTIDE SEQUENCE [LARGE SCALE GENOMIC DNA]</scope>
    <source>
        <strain>ATCC 8585 / CBS 2359 / DSM 70799 / NBRC 1267 / NRRL Y-1140 / WM37</strain>
    </source>
</reference>
<feature type="chain" id="PRO_0000405456" description="Required for respiratory growth protein 7, mitochondrial">
    <location>
        <begin position="1"/>
        <end position="233"/>
    </location>
</feature>
<organism>
    <name type="scientific">Kluyveromyces lactis (strain ATCC 8585 / CBS 2359 / DSM 70799 / NBRC 1267 / NRRL Y-1140 / WM37)</name>
    <name type="common">Yeast</name>
    <name type="synonym">Candida sphaerica</name>
    <dbReference type="NCBI Taxonomy" id="284590"/>
    <lineage>
        <taxon>Eukaryota</taxon>
        <taxon>Fungi</taxon>
        <taxon>Dikarya</taxon>
        <taxon>Ascomycota</taxon>
        <taxon>Saccharomycotina</taxon>
        <taxon>Saccharomycetes</taxon>
        <taxon>Saccharomycetales</taxon>
        <taxon>Saccharomycetaceae</taxon>
        <taxon>Kluyveromyces</taxon>
    </lineage>
</organism>
<gene>
    <name type="primary">RRG7</name>
    <name type="ordered locus">KLLA0F08503g</name>
</gene>
<dbReference type="EMBL" id="CR382126">
    <property type="protein sequence ID" value="CAG98174.1"/>
    <property type="molecule type" value="Genomic_DNA"/>
</dbReference>
<dbReference type="RefSeq" id="XP_455466.1">
    <property type="nucleotide sequence ID" value="XM_455466.1"/>
</dbReference>
<dbReference type="FunCoup" id="Q6CKS3">
    <property type="interactions" value="61"/>
</dbReference>
<dbReference type="PaxDb" id="284590-Q6CKS3"/>
<dbReference type="KEGG" id="kla:KLLA0_F08503g"/>
<dbReference type="eggNOG" id="ENOG502RZ1Q">
    <property type="taxonomic scope" value="Eukaryota"/>
</dbReference>
<dbReference type="HOGENOM" id="CLU_085105_1_0_1"/>
<dbReference type="InParanoid" id="Q6CKS3"/>
<dbReference type="OMA" id="YYENEYA"/>
<dbReference type="Proteomes" id="UP000000598">
    <property type="component" value="Chromosome F"/>
</dbReference>
<dbReference type="GO" id="GO:0005739">
    <property type="term" value="C:mitochondrion"/>
    <property type="evidence" value="ECO:0007669"/>
    <property type="project" value="UniProtKB-SubCell"/>
</dbReference>
<dbReference type="GO" id="GO:0003676">
    <property type="term" value="F:nucleic acid binding"/>
    <property type="evidence" value="ECO:0007669"/>
    <property type="project" value="InterPro"/>
</dbReference>
<dbReference type="Gene3D" id="3.40.1350.10">
    <property type="match status" value="1"/>
</dbReference>
<dbReference type="InterPro" id="IPR018828">
    <property type="entry name" value="RRG7"/>
</dbReference>
<dbReference type="InterPro" id="IPR011856">
    <property type="entry name" value="tRNA_endonuc-like_dom_sf"/>
</dbReference>
<dbReference type="PANTHER" id="PTHR28133">
    <property type="entry name" value="REQUIRED FOR RESPIRATORY GROWTH PROTEIN 7, MITOCHONDRIAL"/>
    <property type="match status" value="1"/>
</dbReference>
<dbReference type="PANTHER" id="PTHR28133:SF1">
    <property type="entry name" value="REQUIRED FOR RESPIRATORY GROWTH PROTEIN 7, MITOCHONDRIAL"/>
    <property type="match status" value="1"/>
</dbReference>
<dbReference type="Pfam" id="PF10356">
    <property type="entry name" value="RRG7"/>
    <property type="match status" value="1"/>
</dbReference>
<evidence type="ECO:0000250" key="1"/>
<evidence type="ECO:0000305" key="2"/>
<proteinExistence type="inferred from homology"/>
<protein>
    <recommendedName>
        <fullName>Required for respiratory growth protein 7, mitochondrial</fullName>
    </recommendedName>
</protein>
<keyword id="KW-0496">Mitochondrion</keyword>
<keyword id="KW-1185">Reference proteome</keyword>
<sequence length="233" mass="26580">MSWKGVFASSFPKDTLQKYIAANESIANSTVFQGTLYELTVVRELMNKLRLEDMQVVGGSYDGGIDIRGKWNVLPLTKAIEMQIQFDELPKRLKLPTTSIKPWKHRVKPDKYLDCYIQCKAFNSDKVTGRQVRELIGSFSMQVPARKRNSSIMIMSSPTLFTKDGIRLFNEAAIPMVFTKVDMIQRLADGSFDVKNSGKLQHYYENDYASKLLANCGIKEWLKLKGYESLAQK</sequence>
<name>RRG7_KLULA</name>